<sequence>MKIWCAVCDKEEASVFCCADEAALCNGCDRHVHFANKLAGKHLRFSLTSPTFKDAPLCDICGERRALLFCQEDRAILCRECDIPIHQANEHTKKHNRFLLTGVKISASPSAYPRASNSNSAAAFGRAKTRPKSVSSEVPSSASNEVFTSSSSTTTSNCYYGIEENYHHVSDSGSGSGCTGSISEYLMETLPGWRVEDLLEHPSCVSYEDNIITNNNNSESYRVYDGSSQFHHQGFWDHKPFS</sequence>
<dbReference type="EMBL" id="AL035679">
    <property type="protein sequence ID" value="CAB38827.1"/>
    <property type="status" value="ALT_SEQ"/>
    <property type="molecule type" value="Genomic_DNA"/>
</dbReference>
<dbReference type="EMBL" id="AL161594">
    <property type="protein sequence ID" value="CAB80570.1"/>
    <property type="status" value="ALT_SEQ"/>
    <property type="molecule type" value="Genomic_DNA"/>
</dbReference>
<dbReference type="EMBL" id="CP002687">
    <property type="protein sequence ID" value="AEE87014.1"/>
    <property type="molecule type" value="Genomic_DNA"/>
</dbReference>
<dbReference type="EMBL" id="AK118879">
    <property type="protein sequence ID" value="BAC43464.1"/>
    <property type="molecule type" value="mRNA"/>
</dbReference>
<dbReference type="EMBL" id="BT028893">
    <property type="protein sequence ID" value="ABI49440.1"/>
    <property type="molecule type" value="mRNA"/>
</dbReference>
<dbReference type="PIR" id="T06067">
    <property type="entry name" value="T06067"/>
</dbReference>
<dbReference type="RefSeq" id="NP_195618.2">
    <property type="nucleotide sequence ID" value="NM_120067.7"/>
</dbReference>
<dbReference type="SMR" id="Q0IGM7"/>
<dbReference type="BioGRID" id="15342">
    <property type="interactions" value="16"/>
</dbReference>
<dbReference type="FunCoup" id="Q0IGM7">
    <property type="interactions" value="21"/>
</dbReference>
<dbReference type="IntAct" id="Q0IGM7">
    <property type="interactions" value="9"/>
</dbReference>
<dbReference type="STRING" id="3702.Q0IGM7"/>
<dbReference type="iPTMnet" id="Q0IGM7"/>
<dbReference type="PaxDb" id="3702-AT4G39070.1"/>
<dbReference type="EnsemblPlants" id="AT4G39070.1">
    <property type="protein sequence ID" value="AT4G39070.1"/>
    <property type="gene ID" value="AT4G39070"/>
</dbReference>
<dbReference type="GeneID" id="830062"/>
<dbReference type="Gramene" id="AT4G39070.1">
    <property type="protein sequence ID" value="AT4G39070.1"/>
    <property type="gene ID" value="AT4G39070"/>
</dbReference>
<dbReference type="KEGG" id="ath:AT4G39070"/>
<dbReference type="Araport" id="AT4G39070"/>
<dbReference type="TAIR" id="AT4G39070">
    <property type="gene designation" value="BZS1"/>
</dbReference>
<dbReference type="eggNOG" id="ENOG502QUWE">
    <property type="taxonomic scope" value="Eukaryota"/>
</dbReference>
<dbReference type="HOGENOM" id="CLU_025298_4_1_1"/>
<dbReference type="InParanoid" id="Q0IGM7"/>
<dbReference type="OMA" id="GIEENYH"/>
<dbReference type="PhylomeDB" id="Q0IGM7"/>
<dbReference type="PRO" id="PR:Q0IGM7"/>
<dbReference type="Proteomes" id="UP000006548">
    <property type="component" value="Chromosome 4"/>
</dbReference>
<dbReference type="ExpressionAtlas" id="Q0IGM7">
    <property type="expression patterns" value="baseline and differential"/>
</dbReference>
<dbReference type="GO" id="GO:0005634">
    <property type="term" value="C:nucleus"/>
    <property type="evidence" value="ECO:0007669"/>
    <property type="project" value="UniProtKB-SubCell"/>
</dbReference>
<dbReference type="GO" id="GO:0003700">
    <property type="term" value="F:DNA-binding transcription factor activity"/>
    <property type="evidence" value="ECO:0000250"/>
    <property type="project" value="TAIR"/>
</dbReference>
<dbReference type="GO" id="GO:0000976">
    <property type="term" value="F:transcription cis-regulatory region binding"/>
    <property type="evidence" value="ECO:0000353"/>
    <property type="project" value="TAIR"/>
</dbReference>
<dbReference type="GO" id="GO:0008270">
    <property type="term" value="F:zinc ion binding"/>
    <property type="evidence" value="ECO:0007669"/>
    <property type="project" value="UniProtKB-KW"/>
</dbReference>
<dbReference type="GO" id="GO:1900458">
    <property type="term" value="P:negative regulation of brassinosteroid mediated signaling pathway"/>
    <property type="evidence" value="ECO:0000314"/>
    <property type="project" value="UniProtKB"/>
</dbReference>
<dbReference type="GO" id="GO:2000306">
    <property type="term" value="P:positive regulation of photomorphogenesis"/>
    <property type="evidence" value="ECO:0000314"/>
    <property type="project" value="UniProtKB"/>
</dbReference>
<dbReference type="GO" id="GO:0006355">
    <property type="term" value="P:regulation of DNA-templated transcription"/>
    <property type="evidence" value="ECO:0000304"/>
    <property type="project" value="TAIR"/>
</dbReference>
<dbReference type="GO" id="GO:0009741">
    <property type="term" value="P:response to brassinosteroid"/>
    <property type="evidence" value="ECO:0000270"/>
    <property type="project" value="TAIR"/>
</dbReference>
<dbReference type="CDD" id="cd19821">
    <property type="entry name" value="Bbox1_BBX-like"/>
    <property type="match status" value="2"/>
</dbReference>
<dbReference type="FunFam" id="3.30.160.60:FF:000856">
    <property type="entry name" value="B-box zinc finger protein 21"/>
    <property type="match status" value="1"/>
</dbReference>
<dbReference type="Gene3D" id="3.30.160.60">
    <property type="entry name" value="Classic Zinc Finger"/>
    <property type="match status" value="1"/>
</dbReference>
<dbReference type="InterPro" id="IPR051979">
    <property type="entry name" value="B-box_zinc_finger"/>
</dbReference>
<dbReference type="InterPro" id="IPR049808">
    <property type="entry name" value="CONSTANS-like_Bbox1"/>
</dbReference>
<dbReference type="InterPro" id="IPR000315">
    <property type="entry name" value="Znf_B-box"/>
</dbReference>
<dbReference type="PANTHER" id="PTHR31832:SF87">
    <property type="entry name" value="B-BOX ZINC FINGER PROTEIN 20"/>
    <property type="match status" value="1"/>
</dbReference>
<dbReference type="PANTHER" id="PTHR31832">
    <property type="entry name" value="B-BOX ZINC FINGER PROTEIN 22"/>
    <property type="match status" value="1"/>
</dbReference>
<dbReference type="Pfam" id="PF00643">
    <property type="entry name" value="zf-B_box"/>
    <property type="match status" value="1"/>
</dbReference>
<dbReference type="SMART" id="SM00336">
    <property type="entry name" value="BBOX"/>
    <property type="match status" value="2"/>
</dbReference>
<dbReference type="PROSITE" id="PS50119">
    <property type="entry name" value="ZF_BBOX"/>
    <property type="match status" value="2"/>
</dbReference>
<gene>
    <name evidence="5" type="primary">BBX20</name>
    <name evidence="6" type="synonym">BZS1</name>
    <name type="synonym">DBB2</name>
    <name type="synonym">STH7</name>
    <name type="ordered locus">At4g39070</name>
    <name type="ORF">F19H22.170</name>
</gene>
<evidence type="ECO:0000255" key="1">
    <source>
        <dbReference type="PROSITE-ProRule" id="PRU00024"/>
    </source>
</evidence>
<evidence type="ECO:0000256" key="2">
    <source>
        <dbReference type="SAM" id="MobiDB-lite"/>
    </source>
</evidence>
<evidence type="ECO:0000269" key="3">
    <source>
    </source>
</evidence>
<evidence type="ECO:0000269" key="4">
    <source>
    </source>
</evidence>
<evidence type="ECO:0000303" key="5">
    <source>
    </source>
</evidence>
<evidence type="ECO:0000303" key="6">
    <source>
    </source>
</evidence>
<evidence type="ECO:0000305" key="7"/>
<comment type="function">
    <text evidence="4">Acts as a positive regulator of seedling photomorphogenesis. Plays a negative role in brassinosteroid responses.</text>
</comment>
<comment type="subunit">
    <text evidence="3 4">Interacts with MED25 (PubMed:21343311) and COP1 (PubMed:22535582).</text>
</comment>
<comment type="interaction">
    <interactant intactId="EBI-15191597">
        <id>Q0IGM7</id>
    </interactant>
    <interactant intactId="EBI-301660">
        <id>O24646</id>
        <label>HY5</label>
    </interactant>
    <organismsDiffer>false</organismsDiffer>
    <experiments>3</experiments>
</comment>
<comment type="interaction">
    <interactant intactId="EBI-15191597">
        <id>Q0IGM7</id>
    </interactant>
    <interactant intactId="EBI-15191595">
        <id>A8MS70</id>
        <label>HYH</label>
    </interactant>
    <organismsDiffer>false</organismsDiffer>
    <experiments>3</experiments>
</comment>
<comment type="subcellular location">
    <subcellularLocation>
        <location evidence="7">Nucleus</location>
    </subcellularLocation>
</comment>
<comment type="PTM">
    <text evidence="6">COP1-mediated ubiquitination and subsequent proteasomal degradation of BBX20 occurs in the dark.</text>
</comment>
<comment type="sequence caution" evidence="7">
    <conflict type="erroneous gene model prediction">
        <sequence resource="EMBL-CDS" id="CAB38827"/>
    </conflict>
</comment>
<comment type="sequence caution" evidence="7">
    <conflict type="erroneous gene model prediction">
        <sequence resource="EMBL-CDS" id="CAB80570"/>
    </conflict>
</comment>
<organism>
    <name type="scientific">Arabidopsis thaliana</name>
    <name type="common">Mouse-ear cress</name>
    <dbReference type="NCBI Taxonomy" id="3702"/>
    <lineage>
        <taxon>Eukaryota</taxon>
        <taxon>Viridiplantae</taxon>
        <taxon>Streptophyta</taxon>
        <taxon>Embryophyta</taxon>
        <taxon>Tracheophyta</taxon>
        <taxon>Spermatophyta</taxon>
        <taxon>Magnoliopsida</taxon>
        <taxon>eudicotyledons</taxon>
        <taxon>Gunneridae</taxon>
        <taxon>Pentapetalae</taxon>
        <taxon>rosids</taxon>
        <taxon>malvids</taxon>
        <taxon>Brassicales</taxon>
        <taxon>Brassicaceae</taxon>
        <taxon>Camelineae</taxon>
        <taxon>Arabidopsis</taxon>
    </lineage>
</organism>
<proteinExistence type="evidence at protein level"/>
<accession>Q0IGM7</accession>
<accession>Q8GWF3</accession>
<accession>Q9SVI6</accession>
<reference key="1">
    <citation type="journal article" date="1999" name="Nature">
        <title>Sequence and analysis of chromosome 4 of the plant Arabidopsis thaliana.</title>
        <authorList>
            <person name="Mayer K.F.X."/>
            <person name="Schueller C."/>
            <person name="Wambutt R."/>
            <person name="Murphy G."/>
            <person name="Volckaert G."/>
            <person name="Pohl T."/>
            <person name="Duesterhoeft A."/>
            <person name="Stiekema W."/>
            <person name="Entian K.-D."/>
            <person name="Terryn N."/>
            <person name="Harris B."/>
            <person name="Ansorge W."/>
            <person name="Brandt P."/>
            <person name="Grivell L.A."/>
            <person name="Rieger M."/>
            <person name="Weichselgartner M."/>
            <person name="de Simone V."/>
            <person name="Obermaier B."/>
            <person name="Mache R."/>
            <person name="Mueller M."/>
            <person name="Kreis M."/>
            <person name="Delseny M."/>
            <person name="Puigdomenech P."/>
            <person name="Watson M."/>
            <person name="Schmidtheini T."/>
            <person name="Reichert B."/>
            <person name="Portetelle D."/>
            <person name="Perez-Alonso M."/>
            <person name="Boutry M."/>
            <person name="Bancroft I."/>
            <person name="Vos P."/>
            <person name="Hoheisel J."/>
            <person name="Zimmermann W."/>
            <person name="Wedler H."/>
            <person name="Ridley P."/>
            <person name="Langham S.-A."/>
            <person name="McCullagh B."/>
            <person name="Bilham L."/>
            <person name="Robben J."/>
            <person name="van der Schueren J."/>
            <person name="Grymonprez B."/>
            <person name="Chuang Y.-J."/>
            <person name="Vandenbussche F."/>
            <person name="Braeken M."/>
            <person name="Weltjens I."/>
            <person name="Voet M."/>
            <person name="Bastiaens I."/>
            <person name="Aert R."/>
            <person name="Defoor E."/>
            <person name="Weitzenegger T."/>
            <person name="Bothe G."/>
            <person name="Ramsperger U."/>
            <person name="Hilbert H."/>
            <person name="Braun M."/>
            <person name="Holzer E."/>
            <person name="Brandt A."/>
            <person name="Peters S."/>
            <person name="van Staveren M."/>
            <person name="Dirkse W."/>
            <person name="Mooijman P."/>
            <person name="Klein Lankhorst R."/>
            <person name="Rose M."/>
            <person name="Hauf J."/>
            <person name="Koetter P."/>
            <person name="Berneiser S."/>
            <person name="Hempel S."/>
            <person name="Feldpausch M."/>
            <person name="Lamberth S."/>
            <person name="Van den Daele H."/>
            <person name="De Keyser A."/>
            <person name="Buysshaert C."/>
            <person name="Gielen J."/>
            <person name="Villarroel R."/>
            <person name="De Clercq R."/>
            <person name="van Montagu M."/>
            <person name="Rogers J."/>
            <person name="Cronin A."/>
            <person name="Quail M.A."/>
            <person name="Bray-Allen S."/>
            <person name="Clark L."/>
            <person name="Doggett J."/>
            <person name="Hall S."/>
            <person name="Kay M."/>
            <person name="Lennard N."/>
            <person name="McLay K."/>
            <person name="Mayes R."/>
            <person name="Pettett A."/>
            <person name="Rajandream M.A."/>
            <person name="Lyne M."/>
            <person name="Benes V."/>
            <person name="Rechmann S."/>
            <person name="Borkova D."/>
            <person name="Bloecker H."/>
            <person name="Scharfe M."/>
            <person name="Grimm M."/>
            <person name="Loehnert T.-H."/>
            <person name="Dose S."/>
            <person name="de Haan M."/>
            <person name="Maarse A.C."/>
            <person name="Schaefer M."/>
            <person name="Mueller-Auer S."/>
            <person name="Gabel C."/>
            <person name="Fuchs M."/>
            <person name="Fartmann B."/>
            <person name="Granderath K."/>
            <person name="Dauner D."/>
            <person name="Herzl A."/>
            <person name="Neumann S."/>
            <person name="Argiriou A."/>
            <person name="Vitale D."/>
            <person name="Liguori R."/>
            <person name="Piravandi E."/>
            <person name="Massenet O."/>
            <person name="Quigley F."/>
            <person name="Clabauld G."/>
            <person name="Muendlein A."/>
            <person name="Felber R."/>
            <person name="Schnabl S."/>
            <person name="Hiller R."/>
            <person name="Schmidt W."/>
            <person name="Lecharny A."/>
            <person name="Aubourg S."/>
            <person name="Chefdor F."/>
            <person name="Cooke R."/>
            <person name="Berger C."/>
            <person name="Monfort A."/>
            <person name="Casacuberta E."/>
            <person name="Gibbons T."/>
            <person name="Weber N."/>
            <person name="Vandenbol M."/>
            <person name="Bargues M."/>
            <person name="Terol J."/>
            <person name="Torres A."/>
            <person name="Perez-Perez A."/>
            <person name="Purnelle B."/>
            <person name="Bent E."/>
            <person name="Johnson S."/>
            <person name="Tacon D."/>
            <person name="Jesse T."/>
            <person name="Heijnen L."/>
            <person name="Schwarz S."/>
            <person name="Scholler P."/>
            <person name="Heber S."/>
            <person name="Francs P."/>
            <person name="Bielke C."/>
            <person name="Frishman D."/>
            <person name="Haase D."/>
            <person name="Lemcke K."/>
            <person name="Mewes H.-W."/>
            <person name="Stocker S."/>
            <person name="Zaccaria P."/>
            <person name="Bevan M."/>
            <person name="Wilson R.K."/>
            <person name="de la Bastide M."/>
            <person name="Habermann K."/>
            <person name="Parnell L."/>
            <person name="Dedhia N."/>
            <person name="Gnoj L."/>
            <person name="Schutz K."/>
            <person name="Huang E."/>
            <person name="Spiegel L."/>
            <person name="Sekhon M."/>
            <person name="Murray J."/>
            <person name="Sheet P."/>
            <person name="Cordes M."/>
            <person name="Abu-Threideh J."/>
            <person name="Stoneking T."/>
            <person name="Kalicki J."/>
            <person name="Graves T."/>
            <person name="Harmon G."/>
            <person name="Edwards J."/>
            <person name="Latreille P."/>
            <person name="Courtney L."/>
            <person name="Cloud J."/>
            <person name="Abbott A."/>
            <person name="Scott K."/>
            <person name="Johnson D."/>
            <person name="Minx P."/>
            <person name="Bentley D."/>
            <person name="Fulton B."/>
            <person name="Miller N."/>
            <person name="Greco T."/>
            <person name="Kemp K."/>
            <person name="Kramer J."/>
            <person name="Fulton L."/>
            <person name="Mardis E."/>
            <person name="Dante M."/>
            <person name="Pepin K."/>
            <person name="Hillier L.W."/>
            <person name="Nelson J."/>
            <person name="Spieth J."/>
            <person name="Ryan E."/>
            <person name="Andrews S."/>
            <person name="Geisel C."/>
            <person name="Layman D."/>
            <person name="Du H."/>
            <person name="Ali J."/>
            <person name="Berghoff A."/>
            <person name="Jones K."/>
            <person name="Drone K."/>
            <person name="Cotton M."/>
            <person name="Joshu C."/>
            <person name="Antonoiu B."/>
            <person name="Zidanic M."/>
            <person name="Strong C."/>
            <person name="Sun H."/>
            <person name="Lamar B."/>
            <person name="Yordan C."/>
            <person name="Ma P."/>
            <person name="Zhong J."/>
            <person name="Preston R."/>
            <person name="Vil D."/>
            <person name="Shekher M."/>
            <person name="Matero A."/>
            <person name="Shah R."/>
            <person name="Swaby I.K."/>
            <person name="O'Shaughnessy A."/>
            <person name="Rodriguez M."/>
            <person name="Hoffman J."/>
            <person name="Till S."/>
            <person name="Granat S."/>
            <person name="Shohdy N."/>
            <person name="Hasegawa A."/>
            <person name="Hameed A."/>
            <person name="Lodhi M."/>
            <person name="Johnson A."/>
            <person name="Chen E."/>
            <person name="Marra M.A."/>
            <person name="Martienssen R."/>
            <person name="McCombie W.R."/>
        </authorList>
    </citation>
    <scope>NUCLEOTIDE SEQUENCE [LARGE SCALE GENOMIC DNA]</scope>
    <source>
        <strain>cv. Columbia</strain>
    </source>
</reference>
<reference key="2">
    <citation type="journal article" date="2017" name="Plant J.">
        <title>Araport11: a complete reannotation of the Arabidopsis thaliana reference genome.</title>
        <authorList>
            <person name="Cheng C.Y."/>
            <person name="Krishnakumar V."/>
            <person name="Chan A.P."/>
            <person name="Thibaud-Nissen F."/>
            <person name="Schobel S."/>
            <person name="Town C.D."/>
        </authorList>
    </citation>
    <scope>GENOME REANNOTATION</scope>
    <source>
        <strain>cv. Columbia</strain>
    </source>
</reference>
<reference key="3">
    <citation type="journal article" date="2002" name="Science">
        <title>Functional annotation of a full-length Arabidopsis cDNA collection.</title>
        <authorList>
            <person name="Seki M."/>
            <person name="Narusaka M."/>
            <person name="Kamiya A."/>
            <person name="Ishida J."/>
            <person name="Satou M."/>
            <person name="Sakurai T."/>
            <person name="Nakajima M."/>
            <person name="Enju A."/>
            <person name="Akiyama K."/>
            <person name="Oono Y."/>
            <person name="Muramatsu M."/>
            <person name="Hayashizaki Y."/>
            <person name="Kawai J."/>
            <person name="Carninci P."/>
            <person name="Itoh M."/>
            <person name="Ishii Y."/>
            <person name="Arakawa T."/>
            <person name="Shibata K."/>
            <person name="Shinagawa A."/>
            <person name="Shinozaki K."/>
        </authorList>
    </citation>
    <scope>NUCLEOTIDE SEQUENCE [LARGE SCALE MRNA]</scope>
    <source>
        <strain>cv. Columbia</strain>
    </source>
</reference>
<reference key="4">
    <citation type="submission" date="2006-09" db="EMBL/GenBank/DDBJ databases">
        <title>Arabidopsis ORF Clones.</title>
        <authorList>
            <person name="Bautista V.R."/>
            <person name="Kim C.J."/>
            <person name="Chen H."/>
            <person name="Quinitio C."/>
            <person name="Ecker J.R."/>
        </authorList>
    </citation>
    <scope>NUCLEOTIDE SEQUENCE [LARGE SCALE MRNA]</scope>
</reference>
<reference key="5">
    <citation type="journal article" date="2008" name="Plant Cell">
        <title>LZF1/SALT TOLERANCE HOMOLOG3, an Arabidopsis B-box protein involved in light-dependent development and gene expression, undergoes COP1-mediated ubiquitination.</title>
        <authorList>
            <person name="Datta S."/>
            <person name="Johansson H."/>
            <person name="Hettiarachchi C."/>
            <person name="Irigoyen M.L."/>
            <person name="Desai M."/>
            <person name="Rubio V."/>
            <person name="Holm M."/>
        </authorList>
    </citation>
    <scope>IDENTIFICATION</scope>
</reference>
<reference key="6">
    <citation type="journal article" date="2009" name="Plant Cell">
        <title>The Arabidopsis B-box zinc finger family.</title>
        <authorList>
            <person name="Khanna R."/>
            <person name="Kronmiller B."/>
            <person name="Maszle D.R."/>
            <person name="Coupland G."/>
            <person name="Holm M."/>
            <person name="Mizuno T."/>
            <person name="Wu S.H."/>
        </authorList>
    </citation>
    <scope>GENE FAMILY</scope>
    <scope>NOMENCLATURE</scope>
</reference>
<reference key="7">
    <citation type="journal article" date="2011" name="Mol. Plant">
        <title>A high-throughput screening system for Arabidopsis transcription factors and its application to Med25-dependent transcriptional regulation.</title>
        <authorList>
            <person name="Ou B."/>
            <person name="Yin K.Q."/>
            <person name="Liu S.N."/>
            <person name="Yang Y."/>
            <person name="Gu T."/>
            <person name="Wing Hui J.M."/>
            <person name="Zhang L."/>
            <person name="Miao J."/>
            <person name="Kondou Y."/>
            <person name="Matsui M."/>
            <person name="Gu H.Y."/>
            <person name="Qu L.J."/>
        </authorList>
    </citation>
    <scope>INTERACTION WITH MED25</scope>
</reference>
<reference key="8">
    <citation type="journal article" date="2012" name="Mol. Plant">
        <title>BZS1, a B-box protein, promotes photomorphogenesis downstream of both brassinosteroid and light signaling pathways.</title>
        <authorList>
            <person name="Fan X.Y."/>
            <person name="Sun Y."/>
            <person name="Cao D.M."/>
            <person name="Bai M.Y."/>
            <person name="Luo X.M."/>
            <person name="Yang H.J."/>
            <person name="Wei C.Q."/>
            <person name="Zhu S.W."/>
            <person name="Sun Y."/>
            <person name="Chong K."/>
            <person name="Wang Z.Y."/>
        </authorList>
    </citation>
    <scope>FUNCTION</scope>
    <scope>INTERACTION WITH COP1</scope>
</reference>
<name>BBX20_ARATH</name>
<feature type="chain" id="PRO_0000418140" description="B-box zinc finger protein 20">
    <location>
        <begin position="1"/>
        <end position="242"/>
    </location>
</feature>
<feature type="zinc finger region" description="B box-type 1; atypical" evidence="1">
    <location>
        <begin position="5"/>
        <end position="47"/>
    </location>
</feature>
<feature type="zinc finger region" description="B box-type 2; atypical" evidence="1">
    <location>
        <begin position="58"/>
        <end position="100"/>
    </location>
</feature>
<feature type="region of interest" description="Disordered" evidence="2">
    <location>
        <begin position="112"/>
        <end position="153"/>
    </location>
</feature>
<feature type="compositionally biased region" description="Low complexity" evidence="2">
    <location>
        <begin position="133"/>
        <end position="153"/>
    </location>
</feature>
<feature type="binding site" evidence="1">
    <location>
        <position position="5"/>
    </location>
    <ligand>
        <name>Zn(2+)</name>
        <dbReference type="ChEBI" id="CHEBI:29105"/>
        <label>1</label>
    </ligand>
</feature>
<feature type="binding site" evidence="1">
    <location>
        <position position="8"/>
    </location>
    <ligand>
        <name>Zn(2+)</name>
        <dbReference type="ChEBI" id="CHEBI:29105"/>
        <label>1</label>
    </ligand>
</feature>
<feature type="binding site" evidence="1">
    <location>
        <position position="28"/>
    </location>
    <ligand>
        <name>Zn(2+)</name>
        <dbReference type="ChEBI" id="CHEBI:29105"/>
        <label>1</label>
    </ligand>
</feature>
<feature type="binding site" evidence="1">
    <location>
        <position position="33"/>
    </location>
    <ligand>
        <name>Zn(2+)</name>
        <dbReference type="ChEBI" id="CHEBI:29105"/>
        <label>1</label>
    </ligand>
</feature>
<feature type="binding site" evidence="1">
    <location>
        <position position="58"/>
    </location>
    <ligand>
        <name>Zn(2+)</name>
        <dbReference type="ChEBI" id="CHEBI:29105"/>
        <label>2</label>
    </ligand>
</feature>
<feature type="binding site" evidence="1">
    <location>
        <position position="61"/>
    </location>
    <ligand>
        <name>Zn(2+)</name>
        <dbReference type="ChEBI" id="CHEBI:29105"/>
        <label>2</label>
    </ligand>
</feature>
<feature type="binding site" evidence="1">
    <location>
        <position position="81"/>
    </location>
    <ligand>
        <name>Zn(2+)</name>
        <dbReference type="ChEBI" id="CHEBI:29105"/>
        <label>2</label>
    </ligand>
</feature>
<feature type="binding site" evidence="1">
    <location>
        <position position="91"/>
    </location>
    <ligand>
        <name>Zn(2+)</name>
        <dbReference type="ChEBI" id="CHEBI:29105"/>
        <label>2</label>
    </ligand>
</feature>
<feature type="sequence conflict" description="In Ref. 3; BAC43464." evidence="7" ref="3">
    <original>T</original>
    <variation>A</variation>
    <location>
        <position position="129"/>
    </location>
</feature>
<protein>
    <recommendedName>
        <fullName evidence="5">B-box zinc finger protein 20</fullName>
    </recommendedName>
    <alternativeName>
        <fullName evidence="6">Protein BZR1 SUPPRESSOR 1</fullName>
    </alternativeName>
    <alternativeName>
        <fullName>Protein DOUBLE B-BOX 2</fullName>
    </alternativeName>
    <alternativeName>
        <fullName>Protein SALT TOLERANCE HOMOLOG 7</fullName>
    </alternativeName>
</protein>
<keyword id="KW-0479">Metal-binding</keyword>
<keyword id="KW-0539">Nucleus</keyword>
<keyword id="KW-1185">Reference proteome</keyword>
<keyword id="KW-0677">Repeat</keyword>
<keyword id="KW-0804">Transcription</keyword>
<keyword id="KW-0805">Transcription regulation</keyword>
<keyword id="KW-0832">Ubl conjugation</keyword>
<keyword id="KW-0862">Zinc</keyword>
<keyword id="KW-0863">Zinc-finger</keyword>